<reference key="1">
    <citation type="journal article" date="2006" name="Proc. Natl. Acad. Sci. U.S.A.">
        <title>The complete genome of Rhodococcus sp. RHA1 provides insights into a catabolic powerhouse.</title>
        <authorList>
            <person name="McLeod M.P."/>
            <person name="Warren R.L."/>
            <person name="Hsiao W.W.L."/>
            <person name="Araki N."/>
            <person name="Myhre M."/>
            <person name="Fernandes C."/>
            <person name="Miyazawa D."/>
            <person name="Wong W."/>
            <person name="Lillquist A.L."/>
            <person name="Wang D."/>
            <person name="Dosanjh M."/>
            <person name="Hara H."/>
            <person name="Petrescu A."/>
            <person name="Morin R.D."/>
            <person name="Yang G."/>
            <person name="Stott J.M."/>
            <person name="Schein J.E."/>
            <person name="Shin H."/>
            <person name="Smailus D."/>
            <person name="Siddiqui A.S."/>
            <person name="Marra M.A."/>
            <person name="Jones S.J.M."/>
            <person name="Holt R."/>
            <person name="Brinkman F.S.L."/>
            <person name="Miyauchi K."/>
            <person name="Fukuda M."/>
            <person name="Davies J.E."/>
            <person name="Mohn W.W."/>
            <person name="Eltis L.D."/>
        </authorList>
    </citation>
    <scope>NUCLEOTIDE SEQUENCE [LARGE SCALE GENOMIC DNA]</scope>
    <source>
        <strain>RHA1</strain>
    </source>
</reference>
<evidence type="ECO:0000255" key="1">
    <source>
        <dbReference type="HAMAP-Rule" id="MF_01283"/>
    </source>
</evidence>
<gene>
    <name evidence="1" type="primary">ribBA</name>
    <name type="ordered locus">RHA1_ro07170</name>
</gene>
<proteinExistence type="inferred from homology"/>
<sequence length="417" mass="45169">MTRFDSIERAVADIAAGKAVVVVDDEDRENEGDLIFAAEKATPELVAFMVRYTSGYLCVPLDGADCDRLGLPPMYATNQDKHGTAYTVTVDAREGIGTGISASDRAATMRLLADPSSGAQDFTRPGHVVPLRAKEGGVLRRPGHTEAAVDLARMADLRPAGVICEIVSQKDEGHMAQTDELRVFADDHNLALISIADLIAWRRKHEKHVERVASARIPTRHGEFTAVGYRSIYDDVEHVALVRGDLPGPDGDGSDVLVRVHSECLTGDVFGSLRCDCGPQLDAALDMVAQEGRGVVLYMRGHEGRGIGLMHKLQAYQLQDAGSDTVDANLELGLPADARDYGIGAQILVDLGISSMRLLTNNPAKRVGLDGYGLQITERVSMPLRANAENLTYLRTKRDRMGHDLIGLDDFEAGEML</sequence>
<dbReference type="EC" id="4.1.99.12" evidence="1"/>
<dbReference type="EC" id="3.5.4.25" evidence="1"/>
<dbReference type="EMBL" id="CP000431">
    <property type="protein sequence ID" value="ABG98934.1"/>
    <property type="molecule type" value="Genomic_DNA"/>
</dbReference>
<dbReference type="RefSeq" id="WP_009480441.1">
    <property type="nucleotide sequence ID" value="NC_008268.1"/>
</dbReference>
<dbReference type="SMR" id="Q0S0K2"/>
<dbReference type="KEGG" id="rha:RHA1_ro07170"/>
<dbReference type="eggNOG" id="COG0108">
    <property type="taxonomic scope" value="Bacteria"/>
</dbReference>
<dbReference type="eggNOG" id="COG0807">
    <property type="taxonomic scope" value="Bacteria"/>
</dbReference>
<dbReference type="HOGENOM" id="CLU_020273_1_2_11"/>
<dbReference type="OrthoDB" id="9793111at2"/>
<dbReference type="UniPathway" id="UPA00275">
    <property type="reaction ID" value="UER00399"/>
</dbReference>
<dbReference type="UniPathway" id="UPA00275">
    <property type="reaction ID" value="UER00400"/>
</dbReference>
<dbReference type="Proteomes" id="UP000008710">
    <property type="component" value="Chromosome"/>
</dbReference>
<dbReference type="GO" id="GO:0005829">
    <property type="term" value="C:cytosol"/>
    <property type="evidence" value="ECO:0007669"/>
    <property type="project" value="TreeGrafter"/>
</dbReference>
<dbReference type="GO" id="GO:0008686">
    <property type="term" value="F:3,4-dihydroxy-2-butanone-4-phosphate synthase activity"/>
    <property type="evidence" value="ECO:0007669"/>
    <property type="project" value="UniProtKB-UniRule"/>
</dbReference>
<dbReference type="GO" id="GO:0005525">
    <property type="term" value="F:GTP binding"/>
    <property type="evidence" value="ECO:0007669"/>
    <property type="project" value="UniProtKB-KW"/>
</dbReference>
<dbReference type="GO" id="GO:0003935">
    <property type="term" value="F:GTP cyclohydrolase II activity"/>
    <property type="evidence" value="ECO:0007669"/>
    <property type="project" value="UniProtKB-UniRule"/>
</dbReference>
<dbReference type="GO" id="GO:0000287">
    <property type="term" value="F:magnesium ion binding"/>
    <property type="evidence" value="ECO:0007669"/>
    <property type="project" value="UniProtKB-UniRule"/>
</dbReference>
<dbReference type="GO" id="GO:0030145">
    <property type="term" value="F:manganese ion binding"/>
    <property type="evidence" value="ECO:0007669"/>
    <property type="project" value="UniProtKB-UniRule"/>
</dbReference>
<dbReference type="GO" id="GO:0008270">
    <property type="term" value="F:zinc ion binding"/>
    <property type="evidence" value="ECO:0007669"/>
    <property type="project" value="UniProtKB-UniRule"/>
</dbReference>
<dbReference type="GO" id="GO:0009231">
    <property type="term" value="P:riboflavin biosynthetic process"/>
    <property type="evidence" value="ECO:0007669"/>
    <property type="project" value="UniProtKB-UniRule"/>
</dbReference>
<dbReference type="CDD" id="cd00641">
    <property type="entry name" value="GTP_cyclohydro2"/>
    <property type="match status" value="1"/>
</dbReference>
<dbReference type="FunFam" id="3.40.50.10990:FF:000001">
    <property type="entry name" value="Riboflavin biosynthesis protein RibBA"/>
    <property type="match status" value="1"/>
</dbReference>
<dbReference type="FunFam" id="3.90.870.10:FF:000001">
    <property type="entry name" value="Riboflavin biosynthesis protein RibBA"/>
    <property type="match status" value="1"/>
</dbReference>
<dbReference type="Gene3D" id="3.90.870.10">
    <property type="entry name" value="DHBP synthase"/>
    <property type="match status" value="1"/>
</dbReference>
<dbReference type="Gene3D" id="3.40.50.10990">
    <property type="entry name" value="GTP cyclohydrolase II"/>
    <property type="match status" value="1"/>
</dbReference>
<dbReference type="HAMAP" id="MF_00179">
    <property type="entry name" value="RibA"/>
    <property type="match status" value="1"/>
</dbReference>
<dbReference type="HAMAP" id="MF_00180">
    <property type="entry name" value="RibB"/>
    <property type="match status" value="1"/>
</dbReference>
<dbReference type="HAMAP" id="MF_01283">
    <property type="entry name" value="RibBA"/>
    <property type="match status" value="1"/>
</dbReference>
<dbReference type="InterPro" id="IPR017945">
    <property type="entry name" value="DHBP_synth_RibB-like_a/b_dom"/>
</dbReference>
<dbReference type="InterPro" id="IPR000422">
    <property type="entry name" value="DHBP_synthase_RibB"/>
</dbReference>
<dbReference type="InterPro" id="IPR032677">
    <property type="entry name" value="GTP_cyclohydro_II"/>
</dbReference>
<dbReference type="InterPro" id="IPR000926">
    <property type="entry name" value="RibA"/>
</dbReference>
<dbReference type="InterPro" id="IPR036144">
    <property type="entry name" value="RibA-like_sf"/>
</dbReference>
<dbReference type="InterPro" id="IPR016299">
    <property type="entry name" value="Riboflavin_synth_RibBA"/>
</dbReference>
<dbReference type="NCBIfam" id="NF001591">
    <property type="entry name" value="PRK00393.1"/>
    <property type="match status" value="1"/>
</dbReference>
<dbReference type="NCBIfam" id="NF006803">
    <property type="entry name" value="PRK09311.1"/>
    <property type="match status" value="1"/>
</dbReference>
<dbReference type="NCBIfam" id="TIGR00505">
    <property type="entry name" value="ribA"/>
    <property type="match status" value="1"/>
</dbReference>
<dbReference type="NCBIfam" id="TIGR00506">
    <property type="entry name" value="ribB"/>
    <property type="match status" value="1"/>
</dbReference>
<dbReference type="PANTHER" id="PTHR21327:SF18">
    <property type="entry name" value="3,4-DIHYDROXY-2-BUTANONE 4-PHOSPHATE SYNTHASE"/>
    <property type="match status" value="1"/>
</dbReference>
<dbReference type="PANTHER" id="PTHR21327">
    <property type="entry name" value="GTP CYCLOHYDROLASE II-RELATED"/>
    <property type="match status" value="1"/>
</dbReference>
<dbReference type="Pfam" id="PF00926">
    <property type="entry name" value="DHBP_synthase"/>
    <property type="match status" value="1"/>
</dbReference>
<dbReference type="Pfam" id="PF00925">
    <property type="entry name" value="GTP_cyclohydro2"/>
    <property type="match status" value="1"/>
</dbReference>
<dbReference type="PIRSF" id="PIRSF001259">
    <property type="entry name" value="RibA"/>
    <property type="match status" value="1"/>
</dbReference>
<dbReference type="SUPFAM" id="SSF142695">
    <property type="entry name" value="RibA-like"/>
    <property type="match status" value="1"/>
</dbReference>
<dbReference type="SUPFAM" id="SSF55821">
    <property type="entry name" value="YrdC/RibB"/>
    <property type="match status" value="1"/>
</dbReference>
<organism>
    <name type="scientific">Rhodococcus jostii (strain RHA1)</name>
    <dbReference type="NCBI Taxonomy" id="101510"/>
    <lineage>
        <taxon>Bacteria</taxon>
        <taxon>Bacillati</taxon>
        <taxon>Actinomycetota</taxon>
        <taxon>Actinomycetes</taxon>
        <taxon>Mycobacteriales</taxon>
        <taxon>Nocardiaceae</taxon>
        <taxon>Rhodococcus</taxon>
    </lineage>
</organism>
<name>RIBBA_RHOJR</name>
<protein>
    <recommendedName>
        <fullName evidence="1">Riboflavin biosynthesis protein RibBA</fullName>
    </recommendedName>
    <domain>
        <recommendedName>
            <fullName evidence="1">3,4-dihydroxy-2-butanone 4-phosphate synthase</fullName>
            <shortName evidence="1">DHBP synthase</shortName>
            <ecNumber evidence="1">4.1.99.12</ecNumber>
        </recommendedName>
    </domain>
    <domain>
        <recommendedName>
            <fullName evidence="1">GTP cyclohydrolase-2</fullName>
            <ecNumber evidence="1">3.5.4.25</ecNumber>
        </recommendedName>
        <alternativeName>
            <fullName evidence="1">GTP cyclohydrolase II</fullName>
        </alternativeName>
    </domain>
</protein>
<comment type="function">
    <text evidence="1">Catalyzes the conversion of D-ribulose 5-phosphate to formate and 3,4-dihydroxy-2-butanone 4-phosphate.</text>
</comment>
<comment type="function">
    <text evidence="1">Catalyzes the conversion of GTP to 2,5-diamino-6-ribosylamino-4(3H)-pyrimidinone 5'-phosphate (DARP), formate and pyrophosphate.</text>
</comment>
<comment type="catalytic activity">
    <reaction evidence="1">
        <text>D-ribulose 5-phosphate = (2S)-2-hydroxy-3-oxobutyl phosphate + formate + H(+)</text>
        <dbReference type="Rhea" id="RHEA:18457"/>
        <dbReference type="ChEBI" id="CHEBI:15378"/>
        <dbReference type="ChEBI" id="CHEBI:15740"/>
        <dbReference type="ChEBI" id="CHEBI:58121"/>
        <dbReference type="ChEBI" id="CHEBI:58830"/>
        <dbReference type="EC" id="4.1.99.12"/>
    </reaction>
</comment>
<comment type="catalytic activity">
    <reaction evidence="1">
        <text>GTP + 4 H2O = 2,5-diamino-6-hydroxy-4-(5-phosphoribosylamino)-pyrimidine + formate + 2 phosphate + 3 H(+)</text>
        <dbReference type="Rhea" id="RHEA:23704"/>
        <dbReference type="ChEBI" id="CHEBI:15377"/>
        <dbReference type="ChEBI" id="CHEBI:15378"/>
        <dbReference type="ChEBI" id="CHEBI:15740"/>
        <dbReference type="ChEBI" id="CHEBI:37565"/>
        <dbReference type="ChEBI" id="CHEBI:43474"/>
        <dbReference type="ChEBI" id="CHEBI:58614"/>
        <dbReference type="EC" id="3.5.4.25"/>
    </reaction>
</comment>
<comment type="cofactor">
    <cofactor evidence="1">
        <name>Mg(2+)</name>
        <dbReference type="ChEBI" id="CHEBI:18420"/>
    </cofactor>
    <cofactor evidence="1">
        <name>Mn(2+)</name>
        <dbReference type="ChEBI" id="CHEBI:29035"/>
    </cofactor>
    <text evidence="1">Binds 2 divalent metal cations per subunit. Magnesium or manganese.</text>
</comment>
<comment type="cofactor">
    <cofactor evidence="1">
        <name>Zn(2+)</name>
        <dbReference type="ChEBI" id="CHEBI:29105"/>
    </cofactor>
    <text evidence="1">Binds 1 zinc ion per subunit.</text>
</comment>
<comment type="pathway">
    <text evidence="1">Cofactor biosynthesis; riboflavin biosynthesis; 2-hydroxy-3-oxobutyl phosphate from D-ribulose 5-phosphate: step 1/1.</text>
</comment>
<comment type="pathway">
    <text evidence="1">Cofactor biosynthesis; riboflavin biosynthesis; 5-amino-6-(D-ribitylamino)uracil from GTP: step 1/4.</text>
</comment>
<comment type="similarity">
    <text evidence="1">In the N-terminal section; belongs to the DHBP synthase family.</text>
</comment>
<comment type="similarity">
    <text evidence="1">In the C-terminal section; belongs to the GTP cyclohydrolase II family.</text>
</comment>
<accession>Q0S0K2</accession>
<keyword id="KW-0342">GTP-binding</keyword>
<keyword id="KW-0378">Hydrolase</keyword>
<keyword id="KW-0456">Lyase</keyword>
<keyword id="KW-0460">Magnesium</keyword>
<keyword id="KW-0464">Manganese</keyword>
<keyword id="KW-0479">Metal-binding</keyword>
<keyword id="KW-0511">Multifunctional enzyme</keyword>
<keyword id="KW-0547">Nucleotide-binding</keyword>
<keyword id="KW-0686">Riboflavin biosynthesis</keyword>
<keyword id="KW-0862">Zinc</keyword>
<feature type="chain" id="PRO_1000067430" description="Riboflavin biosynthesis protein RibBA">
    <location>
        <begin position="1"/>
        <end position="417"/>
    </location>
</feature>
<feature type="region of interest" description="DHBP synthase">
    <location>
        <begin position="1"/>
        <end position="204"/>
    </location>
</feature>
<feature type="region of interest" description="GTP cyclohydrolase II">
    <location>
        <begin position="205"/>
        <end position="417"/>
    </location>
</feature>
<feature type="active site" description="Proton acceptor; for GTP cyclohydrolase activity" evidence="1">
    <location>
        <position position="337"/>
    </location>
</feature>
<feature type="active site" description="Nucleophile; for GTP cyclohydrolase activity" evidence="1">
    <location>
        <position position="339"/>
    </location>
</feature>
<feature type="binding site" evidence="1">
    <location>
        <begin position="28"/>
        <end position="29"/>
    </location>
    <ligand>
        <name>D-ribulose 5-phosphate</name>
        <dbReference type="ChEBI" id="CHEBI:58121"/>
    </ligand>
</feature>
<feature type="binding site" evidence="1">
    <location>
        <position position="29"/>
    </location>
    <ligand>
        <name>Mg(2+)</name>
        <dbReference type="ChEBI" id="CHEBI:18420"/>
        <label>1</label>
    </ligand>
</feature>
<feature type="binding site" evidence="1">
    <location>
        <position position="29"/>
    </location>
    <ligand>
        <name>Mg(2+)</name>
        <dbReference type="ChEBI" id="CHEBI:18420"/>
        <label>2</label>
    </ligand>
</feature>
<feature type="binding site" evidence="1">
    <location>
        <position position="33"/>
    </location>
    <ligand>
        <name>D-ribulose 5-phosphate</name>
        <dbReference type="ChEBI" id="CHEBI:58121"/>
    </ligand>
</feature>
<feature type="binding site" evidence="1">
    <location>
        <begin position="141"/>
        <end position="145"/>
    </location>
    <ligand>
        <name>D-ribulose 5-phosphate</name>
        <dbReference type="ChEBI" id="CHEBI:58121"/>
    </ligand>
</feature>
<feature type="binding site" evidence="1">
    <location>
        <position position="144"/>
    </location>
    <ligand>
        <name>Mg(2+)</name>
        <dbReference type="ChEBI" id="CHEBI:18420"/>
        <label>2</label>
    </ligand>
</feature>
<feature type="binding site" evidence="1">
    <location>
        <position position="165"/>
    </location>
    <ligand>
        <name>D-ribulose 5-phosphate</name>
        <dbReference type="ChEBI" id="CHEBI:58121"/>
    </ligand>
</feature>
<feature type="binding site" evidence="1">
    <location>
        <begin position="259"/>
        <end position="263"/>
    </location>
    <ligand>
        <name>GTP</name>
        <dbReference type="ChEBI" id="CHEBI:37565"/>
    </ligand>
</feature>
<feature type="binding site" evidence="1">
    <location>
        <position position="264"/>
    </location>
    <ligand>
        <name>Zn(2+)</name>
        <dbReference type="ChEBI" id="CHEBI:29105"/>
        <note>catalytic</note>
    </ligand>
</feature>
<feature type="binding site" evidence="1">
    <location>
        <position position="275"/>
    </location>
    <ligand>
        <name>Zn(2+)</name>
        <dbReference type="ChEBI" id="CHEBI:29105"/>
        <note>catalytic</note>
    </ligand>
</feature>
<feature type="binding site" evidence="1">
    <location>
        <position position="277"/>
    </location>
    <ligand>
        <name>Zn(2+)</name>
        <dbReference type="ChEBI" id="CHEBI:29105"/>
        <note>catalytic</note>
    </ligand>
</feature>
<feature type="binding site" evidence="1">
    <location>
        <position position="280"/>
    </location>
    <ligand>
        <name>GTP</name>
        <dbReference type="ChEBI" id="CHEBI:37565"/>
    </ligand>
</feature>
<feature type="binding site" evidence="1">
    <location>
        <begin position="303"/>
        <end position="305"/>
    </location>
    <ligand>
        <name>GTP</name>
        <dbReference type="ChEBI" id="CHEBI:37565"/>
    </ligand>
</feature>
<feature type="binding site" evidence="1">
    <location>
        <position position="325"/>
    </location>
    <ligand>
        <name>GTP</name>
        <dbReference type="ChEBI" id="CHEBI:37565"/>
    </ligand>
</feature>
<feature type="binding site" evidence="1">
    <location>
        <position position="360"/>
    </location>
    <ligand>
        <name>GTP</name>
        <dbReference type="ChEBI" id="CHEBI:37565"/>
    </ligand>
</feature>
<feature type="binding site" evidence="1">
    <location>
        <position position="365"/>
    </location>
    <ligand>
        <name>GTP</name>
        <dbReference type="ChEBI" id="CHEBI:37565"/>
    </ligand>
</feature>
<feature type="site" description="Essential for DHBP synthase activity" evidence="1">
    <location>
        <position position="127"/>
    </location>
</feature>
<feature type="site" description="Essential for DHBP synthase activity" evidence="1">
    <location>
        <position position="165"/>
    </location>
</feature>